<accession>B4L1Z2</accession>
<gene>
    <name type="ORF">GI15901</name>
</gene>
<sequence length="1014" mass="113029">MPESIIAGIPVHFPFEPYEVQRAFMEKVIMCLRDGTNGVLESPTGTGKTLSLLCSSLAWIRTRQSEHQINMQKLQMEQQQRQATGGSATGAISDLALTMGKANNWGVPKVIYASRTHSQLTQAMRELKRTAYASMRSVVLGSRDQLCIHPDVMKEQGNSNKVNMCKLKVHAKTCSFQLRVESKKDHPDFRGPSIMDIEDLVKVGQRLKMCPYYASKELVSSADITFMPYNYLLDPKARKANKIELSNTIVILDEAHNIEKICEESASVQIRSSDVAMAIEDVTHIMKIFTSADSQDSGGPEEPKDFTLDDLTLLKEMLLELEKAIDGVVVENQVEGTTYPAAHIYELLGKANFTYGNCATIVALLDKLVQYLMVASQHSMLRKGGSFMVLSDLLNVVFANKEDIMAKVHRSFKVHVQIEDTKQTKPAGNSNSKQTGWLGKGNNATSTVSKTAKIINFWCFNPGFGMEQLLNTQVRSVILTSGTLAPLKPLIAELAIPVAQHLENPHIVDQSQVYVKIIGTGPDREQLISNYKNRDNPKYISSLGQTILNVSRIVPDGLLVFFPSYPMLNQCVDAWQASGLWADLSSRKPIFLEPRGKDQFTSTMEEFYQAIRDSKGACFMAVCRGKVSEGLDFADRNGRAVIITGLPFPPLKDPKVILKRRYLETNRTKENQLLSGQEWYNLDATRAVNQAIGRVIRHRHDYGAILLCDARFQDASQVQQLSKWIRGHLGARPQSSPFGPIVRELRQFFKHAEQTMVQPDERVVEPPLQIVCKEEQPTLTPSYNSNTQIKREPGSGVNKFQLASELAAKAEMANSIKSWTPADYVNAAGCTNQSQTAPNAMDFMSRLNSNVTSIDFNNTDLVKIHKRERSSPTANESLTSGKKRFKLISSTDMVKTEPGTSNSCSYGNTSSSGSDSRCCSAKPAEYPLKEAPESRADFLREVRSVVDSDKFRSFGKALLAYKTGGDNCFEVLMVLLLDVLGAPKLRYLLHGMRRYLKNEHKEEFDIRLASLQAS</sequence>
<protein>
    <recommendedName>
        <fullName evidence="2">Regulator of telomere elongation helicase 1 homolog</fullName>
        <ecNumber evidence="2">5.6.2.-</ecNumber>
    </recommendedName>
</protein>
<keyword id="KW-0004">4Fe-4S</keyword>
<keyword id="KW-0067">ATP-binding</keyword>
<keyword id="KW-0227">DNA damage</keyword>
<keyword id="KW-0234">DNA repair</keyword>
<keyword id="KW-0238">DNA-binding</keyword>
<keyword id="KW-0347">Helicase</keyword>
<keyword id="KW-0378">Hydrolase</keyword>
<keyword id="KW-0408">Iron</keyword>
<keyword id="KW-0411">Iron-sulfur</keyword>
<keyword id="KW-0413">Isomerase</keyword>
<keyword id="KW-0479">Metal-binding</keyword>
<keyword id="KW-0547">Nucleotide-binding</keyword>
<keyword id="KW-0539">Nucleus</keyword>
<keyword id="KW-0597">Phosphoprotein</keyword>
<keyword id="KW-1185">Reference proteome</keyword>
<proteinExistence type="inferred from homology"/>
<feature type="chain" id="PRO_0000370624" description="Regulator of telomere elongation helicase 1 homolog">
    <location>
        <begin position="1"/>
        <end position="1014"/>
    </location>
</feature>
<feature type="domain" description="Helicase ATP-binding" evidence="2">
    <location>
        <begin position="7"/>
        <end position="324"/>
    </location>
</feature>
<feature type="region of interest" description="Disordered" evidence="3">
    <location>
        <begin position="891"/>
        <end position="917"/>
    </location>
</feature>
<feature type="short sequence motif" description="DEAH box">
    <location>
        <begin position="253"/>
        <end position="256"/>
    </location>
</feature>
<feature type="compositionally biased region" description="Low complexity" evidence="3">
    <location>
        <begin position="899"/>
        <end position="917"/>
    </location>
</feature>
<feature type="binding site" evidence="2">
    <location>
        <begin position="42"/>
        <end position="49"/>
    </location>
    <ligand>
        <name>ATP</name>
        <dbReference type="ChEBI" id="CHEBI:30616"/>
    </ligand>
</feature>
<feature type="binding site" evidence="2">
    <location>
        <position position="147"/>
    </location>
    <ligand>
        <name>[4Fe-4S] cluster</name>
        <dbReference type="ChEBI" id="CHEBI:49883"/>
    </ligand>
</feature>
<feature type="binding site" evidence="2">
    <location>
        <position position="165"/>
    </location>
    <ligand>
        <name>[4Fe-4S] cluster</name>
        <dbReference type="ChEBI" id="CHEBI:49883"/>
    </ligand>
</feature>
<feature type="binding site" evidence="2">
    <location>
        <position position="174"/>
    </location>
    <ligand>
        <name>[4Fe-4S] cluster</name>
        <dbReference type="ChEBI" id="CHEBI:49883"/>
    </ligand>
</feature>
<feature type="binding site" evidence="2">
    <location>
        <position position="210"/>
    </location>
    <ligand>
        <name>[4Fe-4S] cluster</name>
        <dbReference type="ChEBI" id="CHEBI:49883"/>
    </ligand>
</feature>
<feature type="modified residue" description="Phosphothreonine" evidence="1">
    <location>
        <position position="873"/>
    </location>
</feature>
<dbReference type="EC" id="5.6.2.-" evidence="2"/>
<dbReference type="EMBL" id="CH933810">
    <property type="protein sequence ID" value="EDW07713.1"/>
    <property type="molecule type" value="Genomic_DNA"/>
</dbReference>
<dbReference type="SMR" id="B4L1Z2"/>
<dbReference type="FunCoup" id="B4L1Z2">
    <property type="interactions" value="1872"/>
</dbReference>
<dbReference type="EnsemblMetazoa" id="FBtr0166626">
    <property type="protein sequence ID" value="FBpp0165118"/>
    <property type="gene ID" value="FBgn0138650"/>
</dbReference>
<dbReference type="EnsemblMetazoa" id="XM_002010360.4">
    <property type="protein sequence ID" value="XP_002010396.1"/>
    <property type="gene ID" value="LOC6584754"/>
</dbReference>
<dbReference type="EnsemblMetazoa" id="XM_032732497.2">
    <property type="protein sequence ID" value="XP_032588388.1"/>
    <property type="gene ID" value="LOC6584754"/>
</dbReference>
<dbReference type="GeneID" id="6584754"/>
<dbReference type="KEGG" id="dmo:Dmoj_GI15901"/>
<dbReference type="CTD" id="51750"/>
<dbReference type="eggNOG" id="KOG1132">
    <property type="taxonomic scope" value="Eukaryota"/>
</dbReference>
<dbReference type="HOGENOM" id="CLU_006515_4_0_1"/>
<dbReference type="InParanoid" id="B4L1Z2"/>
<dbReference type="OMA" id="NCATIVA"/>
<dbReference type="OrthoDB" id="19182at2759"/>
<dbReference type="PhylomeDB" id="B4L1Z2"/>
<dbReference type="Proteomes" id="UP000009192">
    <property type="component" value="Unassembled WGS sequence"/>
</dbReference>
<dbReference type="GO" id="GO:0005634">
    <property type="term" value="C:nucleus"/>
    <property type="evidence" value="ECO:0000250"/>
    <property type="project" value="UniProtKB"/>
</dbReference>
<dbReference type="GO" id="GO:0051539">
    <property type="term" value="F:4 iron, 4 sulfur cluster binding"/>
    <property type="evidence" value="ECO:0007669"/>
    <property type="project" value="UniProtKB-UniRule"/>
</dbReference>
<dbReference type="GO" id="GO:0005524">
    <property type="term" value="F:ATP binding"/>
    <property type="evidence" value="ECO:0000250"/>
    <property type="project" value="UniProtKB"/>
</dbReference>
<dbReference type="GO" id="GO:0016887">
    <property type="term" value="F:ATP hydrolysis activity"/>
    <property type="evidence" value="ECO:0007669"/>
    <property type="project" value="RHEA"/>
</dbReference>
<dbReference type="GO" id="GO:0003682">
    <property type="term" value="F:chromatin binding"/>
    <property type="evidence" value="ECO:0007669"/>
    <property type="project" value="EnsemblMetazoa"/>
</dbReference>
<dbReference type="GO" id="GO:0003677">
    <property type="term" value="F:DNA binding"/>
    <property type="evidence" value="ECO:0007669"/>
    <property type="project" value="UniProtKB-UniRule"/>
</dbReference>
<dbReference type="GO" id="GO:0003678">
    <property type="term" value="F:DNA helicase activity"/>
    <property type="evidence" value="ECO:0000250"/>
    <property type="project" value="UniProtKB"/>
</dbReference>
<dbReference type="GO" id="GO:0070182">
    <property type="term" value="F:DNA polymerase binding"/>
    <property type="evidence" value="ECO:0007669"/>
    <property type="project" value="TreeGrafter"/>
</dbReference>
<dbReference type="GO" id="GO:0046872">
    <property type="term" value="F:metal ion binding"/>
    <property type="evidence" value="ECO:0007669"/>
    <property type="project" value="UniProtKB-UniRule"/>
</dbReference>
<dbReference type="GO" id="GO:0006310">
    <property type="term" value="P:DNA recombination"/>
    <property type="evidence" value="ECO:0007669"/>
    <property type="project" value="InterPro"/>
</dbReference>
<dbReference type="GO" id="GO:0006281">
    <property type="term" value="P:DNA repair"/>
    <property type="evidence" value="ECO:0007669"/>
    <property type="project" value="UniProtKB-UniRule"/>
</dbReference>
<dbReference type="GO" id="GO:0006260">
    <property type="term" value="P:DNA replication"/>
    <property type="evidence" value="ECO:0007669"/>
    <property type="project" value="InterPro"/>
</dbReference>
<dbReference type="GO" id="GO:0036098">
    <property type="term" value="P:male germ-line stem cell population maintenance"/>
    <property type="evidence" value="ECO:0007669"/>
    <property type="project" value="EnsemblMetazoa"/>
</dbReference>
<dbReference type="GO" id="GO:0045910">
    <property type="term" value="P:negative regulation of DNA recombination"/>
    <property type="evidence" value="ECO:0007669"/>
    <property type="project" value="TreeGrafter"/>
</dbReference>
<dbReference type="GO" id="GO:1904430">
    <property type="term" value="P:negative regulation of t-circle formation"/>
    <property type="evidence" value="ECO:0007669"/>
    <property type="project" value="TreeGrafter"/>
</dbReference>
<dbReference type="GO" id="GO:0010569">
    <property type="term" value="P:regulation of double-strand break repair via homologous recombination"/>
    <property type="evidence" value="ECO:0000250"/>
    <property type="project" value="UniProtKB"/>
</dbReference>
<dbReference type="GO" id="GO:0090657">
    <property type="term" value="P:telomeric loop disassembly"/>
    <property type="evidence" value="ECO:0007669"/>
    <property type="project" value="TreeGrafter"/>
</dbReference>
<dbReference type="CDD" id="cd17970">
    <property type="entry name" value="DEAHc_FancJ"/>
    <property type="match status" value="1"/>
</dbReference>
<dbReference type="CDD" id="cd13932">
    <property type="entry name" value="HN_RTEL1"/>
    <property type="match status" value="1"/>
</dbReference>
<dbReference type="CDD" id="cd18788">
    <property type="entry name" value="SF2_C_XPD"/>
    <property type="match status" value="1"/>
</dbReference>
<dbReference type="FunFam" id="3.40.50.300:FF:000431">
    <property type="entry name" value="Regulator of telomere elongation helicase 1"/>
    <property type="match status" value="1"/>
</dbReference>
<dbReference type="FunFam" id="1.20.1160.20:FF:000011">
    <property type="entry name" value="Regulator of telomere elongation helicase 1 homolog"/>
    <property type="match status" value="1"/>
</dbReference>
<dbReference type="Gene3D" id="1.20.1160.20">
    <property type="match status" value="1"/>
</dbReference>
<dbReference type="Gene3D" id="3.40.50.300">
    <property type="entry name" value="P-loop containing nucleotide triphosphate hydrolases"/>
    <property type="match status" value="2"/>
</dbReference>
<dbReference type="HAMAP" id="MF_03065">
    <property type="entry name" value="RTEL1"/>
    <property type="match status" value="1"/>
</dbReference>
<dbReference type="InterPro" id="IPR006555">
    <property type="entry name" value="ATP-dep_Helicase_C"/>
</dbReference>
<dbReference type="InterPro" id="IPR045028">
    <property type="entry name" value="DinG/Rad3-like"/>
</dbReference>
<dbReference type="InterPro" id="IPR014013">
    <property type="entry name" value="Helic_SF1/SF2_ATP-bd_DinG/Rad3"/>
</dbReference>
<dbReference type="InterPro" id="IPR006554">
    <property type="entry name" value="Helicase-like_DEXD_c2"/>
</dbReference>
<dbReference type="InterPro" id="IPR049909">
    <property type="entry name" value="HHD_RTEL1"/>
</dbReference>
<dbReference type="InterPro" id="IPR027417">
    <property type="entry name" value="P-loop_NTPase"/>
</dbReference>
<dbReference type="InterPro" id="IPR010614">
    <property type="entry name" value="RAD3-like_helicase_DEAD"/>
</dbReference>
<dbReference type="InterPro" id="IPR013020">
    <property type="entry name" value="Rad3/Chl1-like"/>
</dbReference>
<dbReference type="InterPro" id="IPR030845">
    <property type="entry name" value="RTEL1"/>
</dbReference>
<dbReference type="NCBIfam" id="TIGR00604">
    <property type="entry name" value="rad3"/>
    <property type="match status" value="1"/>
</dbReference>
<dbReference type="PANTHER" id="PTHR11472">
    <property type="entry name" value="DNA REPAIR DEAD HELICASE RAD3/XP-D SUBFAMILY MEMBER"/>
    <property type="match status" value="1"/>
</dbReference>
<dbReference type="PANTHER" id="PTHR11472:SF34">
    <property type="entry name" value="REGULATOR OF TELOMERE ELONGATION HELICASE 1"/>
    <property type="match status" value="1"/>
</dbReference>
<dbReference type="Pfam" id="PF23109">
    <property type="entry name" value="ARCH_RTEL1"/>
    <property type="match status" value="1"/>
</dbReference>
<dbReference type="Pfam" id="PF06733">
    <property type="entry name" value="DEAD_2"/>
    <property type="match status" value="1"/>
</dbReference>
<dbReference type="Pfam" id="PF13307">
    <property type="entry name" value="Helicase_C_2"/>
    <property type="match status" value="1"/>
</dbReference>
<dbReference type="SMART" id="SM00488">
    <property type="entry name" value="DEXDc2"/>
    <property type="match status" value="1"/>
</dbReference>
<dbReference type="SMART" id="SM00491">
    <property type="entry name" value="HELICc2"/>
    <property type="match status" value="1"/>
</dbReference>
<dbReference type="SUPFAM" id="SSF52540">
    <property type="entry name" value="P-loop containing nucleoside triphosphate hydrolases"/>
    <property type="match status" value="2"/>
</dbReference>
<dbReference type="PROSITE" id="PS51193">
    <property type="entry name" value="HELICASE_ATP_BIND_2"/>
    <property type="match status" value="1"/>
</dbReference>
<comment type="function">
    <text evidence="2">A probable ATP-dependent DNA helicase implicated in DNA repair and the maintenance of genomic stability. Acts as an anti-recombinase to counteract toxic recombination and limit crossover during meiosis. Regulates meiotic recombination and crossover homeostasis by physically dissociating strand invasion events and thereby promotes noncrossover repair by meiotic synthesis dependent strand annealing (SDSA) as well as disassembly of D loop recombination intermediates.</text>
</comment>
<comment type="catalytic activity">
    <reaction evidence="2">
        <text>ATP + H2O = ADP + phosphate + H(+)</text>
        <dbReference type="Rhea" id="RHEA:13065"/>
        <dbReference type="ChEBI" id="CHEBI:15377"/>
        <dbReference type="ChEBI" id="CHEBI:15378"/>
        <dbReference type="ChEBI" id="CHEBI:30616"/>
        <dbReference type="ChEBI" id="CHEBI:43474"/>
        <dbReference type="ChEBI" id="CHEBI:456216"/>
    </reaction>
</comment>
<comment type="subcellular location">
    <subcellularLocation>
        <location evidence="2">Nucleus</location>
    </subcellularLocation>
</comment>
<comment type="similarity">
    <text evidence="2">Belongs to the helicase family. RAD3/XPD subfamily.</text>
</comment>
<organism>
    <name type="scientific">Drosophila mojavensis</name>
    <name type="common">Fruit fly</name>
    <dbReference type="NCBI Taxonomy" id="7230"/>
    <lineage>
        <taxon>Eukaryota</taxon>
        <taxon>Metazoa</taxon>
        <taxon>Ecdysozoa</taxon>
        <taxon>Arthropoda</taxon>
        <taxon>Hexapoda</taxon>
        <taxon>Insecta</taxon>
        <taxon>Pterygota</taxon>
        <taxon>Neoptera</taxon>
        <taxon>Endopterygota</taxon>
        <taxon>Diptera</taxon>
        <taxon>Brachycera</taxon>
        <taxon>Muscomorpha</taxon>
        <taxon>Ephydroidea</taxon>
        <taxon>Drosophilidae</taxon>
        <taxon>Drosophila</taxon>
    </lineage>
</organism>
<name>RTEL1_DROMO</name>
<reference key="1">
    <citation type="journal article" date="2007" name="Nature">
        <title>Evolution of genes and genomes on the Drosophila phylogeny.</title>
        <authorList>
            <consortium name="Drosophila 12 genomes consortium"/>
        </authorList>
    </citation>
    <scope>NUCLEOTIDE SEQUENCE [LARGE SCALE GENOMIC DNA]</scope>
    <source>
        <strain>Tucson 15081-1352.22</strain>
    </source>
</reference>
<evidence type="ECO:0000250" key="1"/>
<evidence type="ECO:0000255" key="2">
    <source>
        <dbReference type="HAMAP-Rule" id="MF_03065"/>
    </source>
</evidence>
<evidence type="ECO:0000256" key="3">
    <source>
        <dbReference type="SAM" id="MobiDB-lite"/>
    </source>
</evidence>